<sequence>MNIRPLHDRVIVKRLEVESTSAGGIVLTGSAAEKSTRGEVLAVGNGRILENGTVRPLDVKVGDVVIFNEGYGVKKEKIDGQEVLILSEMDLMAVVD</sequence>
<name>CH10_SHEAM</name>
<dbReference type="EMBL" id="CP000507">
    <property type="protein sequence ID" value="ABM01328.1"/>
    <property type="molecule type" value="Genomic_DNA"/>
</dbReference>
<dbReference type="RefSeq" id="WP_011761232.1">
    <property type="nucleotide sequence ID" value="NC_008700.1"/>
</dbReference>
<dbReference type="SMR" id="A1SAC1"/>
<dbReference type="STRING" id="326297.Sama_3125"/>
<dbReference type="KEGG" id="saz:Sama_3125"/>
<dbReference type="eggNOG" id="COG0234">
    <property type="taxonomic scope" value="Bacteria"/>
</dbReference>
<dbReference type="HOGENOM" id="CLU_132825_1_1_6"/>
<dbReference type="OrthoDB" id="9806791at2"/>
<dbReference type="Proteomes" id="UP000009175">
    <property type="component" value="Chromosome"/>
</dbReference>
<dbReference type="GO" id="GO:0005737">
    <property type="term" value="C:cytoplasm"/>
    <property type="evidence" value="ECO:0007669"/>
    <property type="project" value="UniProtKB-SubCell"/>
</dbReference>
<dbReference type="GO" id="GO:0005524">
    <property type="term" value="F:ATP binding"/>
    <property type="evidence" value="ECO:0007669"/>
    <property type="project" value="InterPro"/>
</dbReference>
<dbReference type="GO" id="GO:0046872">
    <property type="term" value="F:metal ion binding"/>
    <property type="evidence" value="ECO:0007669"/>
    <property type="project" value="TreeGrafter"/>
</dbReference>
<dbReference type="GO" id="GO:0044183">
    <property type="term" value="F:protein folding chaperone"/>
    <property type="evidence" value="ECO:0007669"/>
    <property type="project" value="InterPro"/>
</dbReference>
<dbReference type="GO" id="GO:0051087">
    <property type="term" value="F:protein-folding chaperone binding"/>
    <property type="evidence" value="ECO:0007669"/>
    <property type="project" value="TreeGrafter"/>
</dbReference>
<dbReference type="GO" id="GO:0051082">
    <property type="term" value="F:unfolded protein binding"/>
    <property type="evidence" value="ECO:0007669"/>
    <property type="project" value="TreeGrafter"/>
</dbReference>
<dbReference type="GO" id="GO:0051085">
    <property type="term" value="P:chaperone cofactor-dependent protein refolding"/>
    <property type="evidence" value="ECO:0007669"/>
    <property type="project" value="TreeGrafter"/>
</dbReference>
<dbReference type="CDD" id="cd00320">
    <property type="entry name" value="cpn10"/>
    <property type="match status" value="1"/>
</dbReference>
<dbReference type="FunFam" id="2.30.33.40:FF:000001">
    <property type="entry name" value="10 kDa chaperonin"/>
    <property type="match status" value="1"/>
</dbReference>
<dbReference type="Gene3D" id="2.30.33.40">
    <property type="entry name" value="GroES chaperonin"/>
    <property type="match status" value="1"/>
</dbReference>
<dbReference type="HAMAP" id="MF_00580">
    <property type="entry name" value="CH10"/>
    <property type="match status" value="1"/>
</dbReference>
<dbReference type="InterPro" id="IPR020818">
    <property type="entry name" value="Chaperonin_GroES"/>
</dbReference>
<dbReference type="InterPro" id="IPR037124">
    <property type="entry name" value="Chaperonin_GroES_sf"/>
</dbReference>
<dbReference type="InterPro" id="IPR018369">
    <property type="entry name" value="Chaprnonin_Cpn10_CS"/>
</dbReference>
<dbReference type="InterPro" id="IPR011032">
    <property type="entry name" value="GroES-like_sf"/>
</dbReference>
<dbReference type="NCBIfam" id="NF001526">
    <property type="entry name" value="PRK00364.1-1"/>
    <property type="match status" value="1"/>
</dbReference>
<dbReference type="NCBIfam" id="NF001527">
    <property type="entry name" value="PRK00364.1-2"/>
    <property type="match status" value="1"/>
</dbReference>
<dbReference type="NCBIfam" id="NF001531">
    <property type="entry name" value="PRK00364.2-2"/>
    <property type="match status" value="1"/>
</dbReference>
<dbReference type="PANTHER" id="PTHR10772">
    <property type="entry name" value="10 KDA HEAT SHOCK PROTEIN"/>
    <property type="match status" value="1"/>
</dbReference>
<dbReference type="PANTHER" id="PTHR10772:SF58">
    <property type="entry name" value="CO-CHAPERONIN GROES"/>
    <property type="match status" value="1"/>
</dbReference>
<dbReference type="Pfam" id="PF00166">
    <property type="entry name" value="Cpn10"/>
    <property type="match status" value="1"/>
</dbReference>
<dbReference type="PRINTS" id="PR00297">
    <property type="entry name" value="CHAPERONIN10"/>
</dbReference>
<dbReference type="SMART" id="SM00883">
    <property type="entry name" value="Cpn10"/>
    <property type="match status" value="1"/>
</dbReference>
<dbReference type="SUPFAM" id="SSF50129">
    <property type="entry name" value="GroES-like"/>
    <property type="match status" value="1"/>
</dbReference>
<dbReference type="PROSITE" id="PS00681">
    <property type="entry name" value="CHAPERONINS_CPN10"/>
    <property type="match status" value="1"/>
</dbReference>
<organism>
    <name type="scientific">Shewanella amazonensis (strain ATCC BAA-1098 / SB2B)</name>
    <dbReference type="NCBI Taxonomy" id="326297"/>
    <lineage>
        <taxon>Bacteria</taxon>
        <taxon>Pseudomonadati</taxon>
        <taxon>Pseudomonadota</taxon>
        <taxon>Gammaproteobacteria</taxon>
        <taxon>Alteromonadales</taxon>
        <taxon>Shewanellaceae</taxon>
        <taxon>Shewanella</taxon>
    </lineage>
</organism>
<gene>
    <name evidence="1" type="primary">groES</name>
    <name evidence="1" type="synonym">groS</name>
    <name type="ordered locus">Sama_3125</name>
</gene>
<reference key="1">
    <citation type="submission" date="2006-12" db="EMBL/GenBank/DDBJ databases">
        <title>Complete sequence of Shewanella amazonensis SB2B.</title>
        <authorList>
            <consortium name="US DOE Joint Genome Institute"/>
            <person name="Copeland A."/>
            <person name="Lucas S."/>
            <person name="Lapidus A."/>
            <person name="Barry K."/>
            <person name="Detter J.C."/>
            <person name="Glavina del Rio T."/>
            <person name="Hammon N."/>
            <person name="Israni S."/>
            <person name="Dalin E."/>
            <person name="Tice H."/>
            <person name="Pitluck S."/>
            <person name="Munk A.C."/>
            <person name="Brettin T."/>
            <person name="Bruce D."/>
            <person name="Han C."/>
            <person name="Tapia R."/>
            <person name="Gilna P."/>
            <person name="Schmutz J."/>
            <person name="Larimer F."/>
            <person name="Land M."/>
            <person name="Hauser L."/>
            <person name="Kyrpides N."/>
            <person name="Mikhailova N."/>
            <person name="Fredrickson J."/>
            <person name="Richardson P."/>
        </authorList>
    </citation>
    <scope>NUCLEOTIDE SEQUENCE [LARGE SCALE GENOMIC DNA]</scope>
    <source>
        <strain>ATCC BAA-1098 / SB2B</strain>
    </source>
</reference>
<proteinExistence type="inferred from homology"/>
<evidence type="ECO:0000255" key="1">
    <source>
        <dbReference type="HAMAP-Rule" id="MF_00580"/>
    </source>
</evidence>
<comment type="function">
    <text evidence="1">Together with the chaperonin GroEL, plays an essential role in assisting protein folding. The GroEL-GroES system forms a nano-cage that allows encapsulation of the non-native substrate proteins and provides a physical environment optimized to promote and accelerate protein folding. GroES binds to the apical surface of the GroEL ring, thereby capping the opening of the GroEL channel.</text>
</comment>
<comment type="subunit">
    <text evidence="1">Heptamer of 7 subunits arranged in a ring. Interacts with the chaperonin GroEL.</text>
</comment>
<comment type="subcellular location">
    <subcellularLocation>
        <location evidence="1">Cytoplasm</location>
    </subcellularLocation>
</comment>
<comment type="similarity">
    <text evidence="1">Belongs to the GroES chaperonin family.</text>
</comment>
<keyword id="KW-0143">Chaperone</keyword>
<keyword id="KW-0963">Cytoplasm</keyword>
<keyword id="KW-1185">Reference proteome</keyword>
<accession>A1SAC1</accession>
<feature type="chain" id="PRO_1000025358" description="Co-chaperonin GroES">
    <location>
        <begin position="1"/>
        <end position="96"/>
    </location>
</feature>
<protein>
    <recommendedName>
        <fullName evidence="1">Co-chaperonin GroES</fullName>
    </recommendedName>
    <alternativeName>
        <fullName evidence="1">10 kDa chaperonin</fullName>
    </alternativeName>
    <alternativeName>
        <fullName evidence="1">Chaperonin-10</fullName>
        <shortName evidence="1">Cpn10</shortName>
    </alternativeName>
</protein>